<dbReference type="EMBL" id="CP000626">
    <property type="protein sequence ID" value="ABQ18720.1"/>
    <property type="molecule type" value="Genomic_DNA"/>
</dbReference>
<dbReference type="EMBL" id="CP001236">
    <property type="protein sequence ID" value="ACP11807.1"/>
    <property type="molecule type" value="Genomic_DNA"/>
</dbReference>
<dbReference type="RefSeq" id="WP_000637493.1">
    <property type="nucleotide sequence ID" value="NZ_JAACZH010000003.1"/>
</dbReference>
<dbReference type="SMR" id="A5F0W1"/>
<dbReference type="KEGG" id="vco:VC0395_0288"/>
<dbReference type="KEGG" id="vcr:VC395_A0976"/>
<dbReference type="PATRIC" id="fig|345073.21.peg.3700"/>
<dbReference type="eggNOG" id="COG0393">
    <property type="taxonomic scope" value="Bacteria"/>
</dbReference>
<dbReference type="HOGENOM" id="CLU_117144_3_2_6"/>
<dbReference type="OrthoDB" id="9796448at2"/>
<dbReference type="Proteomes" id="UP000000249">
    <property type="component" value="Chromosome 1"/>
</dbReference>
<dbReference type="Gene3D" id="3.30.110.70">
    <property type="entry name" value="Hypothetical protein apc22750. Chain B"/>
    <property type="match status" value="1"/>
</dbReference>
<dbReference type="HAMAP" id="MF_00338">
    <property type="entry name" value="UPF0145"/>
    <property type="match status" value="1"/>
</dbReference>
<dbReference type="InterPro" id="IPR035439">
    <property type="entry name" value="UPF0145_dom_sf"/>
</dbReference>
<dbReference type="InterPro" id="IPR002765">
    <property type="entry name" value="UPF0145_YbjQ-like"/>
</dbReference>
<dbReference type="NCBIfam" id="NF002776">
    <property type="entry name" value="PRK02877.1"/>
    <property type="match status" value="1"/>
</dbReference>
<dbReference type="PANTHER" id="PTHR34068">
    <property type="entry name" value="UPF0145 PROTEIN YBJQ"/>
    <property type="match status" value="1"/>
</dbReference>
<dbReference type="PANTHER" id="PTHR34068:SF1">
    <property type="entry name" value="UPF0145 PROTEIN YBJQ"/>
    <property type="match status" value="1"/>
</dbReference>
<dbReference type="Pfam" id="PF01906">
    <property type="entry name" value="YbjQ_1"/>
    <property type="match status" value="1"/>
</dbReference>
<dbReference type="SUPFAM" id="SSF117782">
    <property type="entry name" value="YbjQ-like"/>
    <property type="match status" value="1"/>
</dbReference>
<feature type="chain" id="PRO_1000072053" description="UPF0145 protein VC0395_0288/VC395_A0976">
    <location>
        <begin position="1"/>
        <end position="106"/>
    </location>
</feature>
<organism>
    <name type="scientific">Vibrio cholerae serotype O1 (strain ATCC 39541 / Classical Ogawa 395 / O395)</name>
    <dbReference type="NCBI Taxonomy" id="345073"/>
    <lineage>
        <taxon>Bacteria</taxon>
        <taxon>Pseudomonadati</taxon>
        <taxon>Pseudomonadota</taxon>
        <taxon>Gammaproteobacteria</taxon>
        <taxon>Vibrionales</taxon>
        <taxon>Vibrionaceae</taxon>
        <taxon>Vibrio</taxon>
    </lineage>
</organism>
<reference key="1">
    <citation type="submission" date="2007-03" db="EMBL/GenBank/DDBJ databases">
        <authorList>
            <person name="Heidelberg J."/>
        </authorList>
    </citation>
    <scope>NUCLEOTIDE SEQUENCE [LARGE SCALE GENOMIC DNA]</scope>
    <source>
        <strain>ATCC 39541 / Classical Ogawa 395 / O395</strain>
    </source>
</reference>
<reference key="2">
    <citation type="journal article" date="2008" name="PLoS ONE">
        <title>A recalibrated molecular clock and independent origins for the cholera pandemic clones.</title>
        <authorList>
            <person name="Feng L."/>
            <person name="Reeves P.R."/>
            <person name="Lan R."/>
            <person name="Ren Y."/>
            <person name="Gao C."/>
            <person name="Zhou Z."/>
            <person name="Ren Y."/>
            <person name="Cheng J."/>
            <person name="Wang W."/>
            <person name="Wang J."/>
            <person name="Qian W."/>
            <person name="Li D."/>
            <person name="Wang L."/>
        </authorList>
    </citation>
    <scope>NUCLEOTIDE SEQUENCE [LARGE SCALE GENOMIC DNA]</scope>
    <source>
        <strain>ATCC 39541 / Classical Ogawa 395 / O395</strain>
    </source>
</reference>
<comment type="similarity">
    <text evidence="1">Belongs to the UPF0145 family.</text>
</comment>
<gene>
    <name type="ordered locus">VC0395_0288</name>
    <name type="ordered locus">VC395_A0976</name>
</gene>
<name>Y288_VIBC3</name>
<accession>A5F0W1</accession>
<accession>C3M6P4</accession>
<sequence>MIVTTTPNIEGKRIVRYCGVIAGEAILGANIFKDLFAGIRDIVGGRSGTYERELEKARAIALEELQQHAVALGANAVVGIDLDYETFGKANGMLMVSVSGTAVVVE</sequence>
<protein>
    <recommendedName>
        <fullName evidence="1">UPF0145 protein VC0395_0288/VC395_A0976</fullName>
    </recommendedName>
</protein>
<evidence type="ECO:0000255" key="1">
    <source>
        <dbReference type="HAMAP-Rule" id="MF_00338"/>
    </source>
</evidence>
<proteinExistence type="inferred from homology"/>